<sequence length="689" mass="75202">MAQHTFLVEIGTAELPPKALRSLAEAFADNLKSELTKADLAFGDVEWFASPRRLALKVSELAGEQPSKSVEKRGPAVAQAFDAEGKPTKAAEGWARGNGITVEQAERLVTDKGEWLVHTAKVEGRPAKDLLGELVSQALAKLPIPKMMRWGDKTIQFVRPVFTVTLLLDGELVPAHILGIDSARTLRGHRFMGESEFTIDNASQYPQILQERGMVIADFMARKVKIKADAEAAAAAFGGVADLDDALLEEVTALVEWPVVLTANFEEKFLAVPAEALVHTMKGDQKYFPVYDKNGKLLPKFIFVTNIESKDPSQIISGNEKVVRPRLSDAEFFFKTDLKQTLASRLPRLETVLFQQQLGTVKAKVERIETVAGFIAERIGADVAQAKRAGLLSKCDLMTNMVGEFTDTQGVMGMHYARHDGEDEAVAVALNEQYMPRFAGDALPSGLVACAVALADKFDTLAGIFGIGMLPKGDKDPFALRRAAIGALRIMTEKQLDLDLVELVEEAVRVYGDKLTNKTVVTDVVDFMLGRFRAAYQDEGIGADVVLAVLARRPTRPLDFDRRVKAVSHFRSLDAALALAAANKRVSNILAKVEGELPTAVKPELLVDAAEKALATQVAELQAELAPLFAAGDYQAALTRLAALREPVDTFFNEVMVMADDEALKANRLALLNNLRNLFLQVADISLLQ</sequence>
<organism>
    <name type="scientific">Aeromonas hydrophila subsp. hydrophila (strain ATCC 7966 / DSM 30187 / BCRC 13018 / CCUG 14551 / JCM 1027 / KCTC 2358 / NCIMB 9240 / NCTC 8049)</name>
    <dbReference type="NCBI Taxonomy" id="380703"/>
    <lineage>
        <taxon>Bacteria</taxon>
        <taxon>Pseudomonadati</taxon>
        <taxon>Pseudomonadota</taxon>
        <taxon>Gammaproteobacteria</taxon>
        <taxon>Aeromonadales</taxon>
        <taxon>Aeromonadaceae</taxon>
        <taxon>Aeromonas</taxon>
    </lineage>
</organism>
<comment type="catalytic activity">
    <reaction evidence="1">
        <text>tRNA(Gly) + glycine + ATP = glycyl-tRNA(Gly) + AMP + diphosphate</text>
        <dbReference type="Rhea" id="RHEA:16013"/>
        <dbReference type="Rhea" id="RHEA-COMP:9664"/>
        <dbReference type="Rhea" id="RHEA-COMP:9683"/>
        <dbReference type="ChEBI" id="CHEBI:30616"/>
        <dbReference type="ChEBI" id="CHEBI:33019"/>
        <dbReference type="ChEBI" id="CHEBI:57305"/>
        <dbReference type="ChEBI" id="CHEBI:78442"/>
        <dbReference type="ChEBI" id="CHEBI:78522"/>
        <dbReference type="ChEBI" id="CHEBI:456215"/>
        <dbReference type="EC" id="6.1.1.14"/>
    </reaction>
</comment>
<comment type="subunit">
    <text evidence="1">Tetramer of two alpha and two beta subunits.</text>
</comment>
<comment type="subcellular location">
    <subcellularLocation>
        <location evidence="1">Cytoplasm</location>
    </subcellularLocation>
</comment>
<comment type="similarity">
    <text evidence="1">Belongs to the class-II aminoacyl-tRNA synthetase family.</text>
</comment>
<protein>
    <recommendedName>
        <fullName evidence="1">Glycine--tRNA ligase beta subunit</fullName>
        <ecNumber evidence="1">6.1.1.14</ecNumber>
    </recommendedName>
    <alternativeName>
        <fullName evidence="1">Glycyl-tRNA synthetase beta subunit</fullName>
        <shortName evidence="1">GlyRS</shortName>
    </alternativeName>
</protein>
<accession>A0KEJ9</accession>
<evidence type="ECO:0000255" key="1">
    <source>
        <dbReference type="HAMAP-Rule" id="MF_00255"/>
    </source>
</evidence>
<reference key="1">
    <citation type="journal article" date="2006" name="J. Bacteriol.">
        <title>Genome sequence of Aeromonas hydrophila ATCC 7966T: jack of all trades.</title>
        <authorList>
            <person name="Seshadri R."/>
            <person name="Joseph S.W."/>
            <person name="Chopra A.K."/>
            <person name="Sha J."/>
            <person name="Shaw J."/>
            <person name="Graf J."/>
            <person name="Haft D.H."/>
            <person name="Wu M."/>
            <person name="Ren Q."/>
            <person name="Rosovitz M.J."/>
            <person name="Madupu R."/>
            <person name="Tallon L."/>
            <person name="Kim M."/>
            <person name="Jin S."/>
            <person name="Vuong H."/>
            <person name="Stine O.C."/>
            <person name="Ali A."/>
            <person name="Horneman A.J."/>
            <person name="Heidelberg J.F."/>
        </authorList>
    </citation>
    <scope>NUCLEOTIDE SEQUENCE [LARGE SCALE GENOMIC DNA]</scope>
    <source>
        <strain>ATCC 7966 / DSM 30187 / BCRC 13018 / CCUG 14551 / JCM 1027 / KCTC 2358 / NCIMB 9240 / NCTC 8049</strain>
    </source>
</reference>
<feature type="chain" id="PRO_1000006349" description="Glycine--tRNA ligase beta subunit">
    <location>
        <begin position="1"/>
        <end position="689"/>
    </location>
</feature>
<keyword id="KW-0030">Aminoacyl-tRNA synthetase</keyword>
<keyword id="KW-0067">ATP-binding</keyword>
<keyword id="KW-0963">Cytoplasm</keyword>
<keyword id="KW-0436">Ligase</keyword>
<keyword id="KW-0547">Nucleotide-binding</keyword>
<keyword id="KW-0648">Protein biosynthesis</keyword>
<keyword id="KW-1185">Reference proteome</keyword>
<gene>
    <name evidence="1" type="primary">glyS</name>
    <name type="ordered locus">AHA_0127</name>
</gene>
<dbReference type="EC" id="6.1.1.14" evidence="1"/>
<dbReference type="EMBL" id="CP000462">
    <property type="protein sequence ID" value="ABK37089.1"/>
    <property type="molecule type" value="Genomic_DNA"/>
</dbReference>
<dbReference type="RefSeq" id="WP_011704155.1">
    <property type="nucleotide sequence ID" value="NC_008570.1"/>
</dbReference>
<dbReference type="RefSeq" id="YP_854662.1">
    <property type="nucleotide sequence ID" value="NC_008570.1"/>
</dbReference>
<dbReference type="SMR" id="A0KEJ9"/>
<dbReference type="STRING" id="380703.AHA_0127"/>
<dbReference type="EnsemblBacteria" id="ABK37089">
    <property type="protein sequence ID" value="ABK37089"/>
    <property type="gene ID" value="AHA_0127"/>
</dbReference>
<dbReference type="GeneID" id="4487507"/>
<dbReference type="KEGG" id="aha:AHA_0127"/>
<dbReference type="PATRIC" id="fig|380703.7.peg.120"/>
<dbReference type="eggNOG" id="COG0751">
    <property type="taxonomic scope" value="Bacteria"/>
</dbReference>
<dbReference type="HOGENOM" id="CLU_007220_2_2_6"/>
<dbReference type="OrthoDB" id="9775440at2"/>
<dbReference type="Proteomes" id="UP000000756">
    <property type="component" value="Chromosome"/>
</dbReference>
<dbReference type="GO" id="GO:0005829">
    <property type="term" value="C:cytosol"/>
    <property type="evidence" value="ECO:0007669"/>
    <property type="project" value="TreeGrafter"/>
</dbReference>
<dbReference type="GO" id="GO:0004814">
    <property type="term" value="F:arginine-tRNA ligase activity"/>
    <property type="evidence" value="ECO:0007669"/>
    <property type="project" value="InterPro"/>
</dbReference>
<dbReference type="GO" id="GO:0005524">
    <property type="term" value="F:ATP binding"/>
    <property type="evidence" value="ECO:0007669"/>
    <property type="project" value="UniProtKB-UniRule"/>
</dbReference>
<dbReference type="GO" id="GO:0004820">
    <property type="term" value="F:glycine-tRNA ligase activity"/>
    <property type="evidence" value="ECO:0007669"/>
    <property type="project" value="UniProtKB-UniRule"/>
</dbReference>
<dbReference type="GO" id="GO:0006420">
    <property type="term" value="P:arginyl-tRNA aminoacylation"/>
    <property type="evidence" value="ECO:0007669"/>
    <property type="project" value="InterPro"/>
</dbReference>
<dbReference type="GO" id="GO:0006426">
    <property type="term" value="P:glycyl-tRNA aminoacylation"/>
    <property type="evidence" value="ECO:0007669"/>
    <property type="project" value="UniProtKB-UniRule"/>
</dbReference>
<dbReference type="HAMAP" id="MF_00255">
    <property type="entry name" value="Gly_tRNA_synth_beta"/>
    <property type="match status" value="1"/>
</dbReference>
<dbReference type="InterPro" id="IPR008909">
    <property type="entry name" value="DALR_anticod-bd"/>
</dbReference>
<dbReference type="InterPro" id="IPR015944">
    <property type="entry name" value="Gly-tRNA-synth_bsu"/>
</dbReference>
<dbReference type="InterPro" id="IPR006194">
    <property type="entry name" value="Gly-tRNA-synth_heterodimer"/>
</dbReference>
<dbReference type="NCBIfam" id="TIGR00211">
    <property type="entry name" value="glyS"/>
    <property type="match status" value="1"/>
</dbReference>
<dbReference type="PANTHER" id="PTHR30075:SF2">
    <property type="entry name" value="GLYCINE--TRNA LIGASE, CHLOROPLASTIC_MITOCHONDRIAL 2"/>
    <property type="match status" value="1"/>
</dbReference>
<dbReference type="PANTHER" id="PTHR30075">
    <property type="entry name" value="GLYCYL-TRNA SYNTHETASE"/>
    <property type="match status" value="1"/>
</dbReference>
<dbReference type="Pfam" id="PF05746">
    <property type="entry name" value="DALR_1"/>
    <property type="match status" value="1"/>
</dbReference>
<dbReference type="Pfam" id="PF02092">
    <property type="entry name" value="tRNA_synt_2f"/>
    <property type="match status" value="1"/>
</dbReference>
<dbReference type="PRINTS" id="PR01045">
    <property type="entry name" value="TRNASYNTHGB"/>
</dbReference>
<dbReference type="SMART" id="SM00836">
    <property type="entry name" value="DALR_1"/>
    <property type="match status" value="1"/>
</dbReference>
<dbReference type="SUPFAM" id="SSF109604">
    <property type="entry name" value="HD-domain/PDEase-like"/>
    <property type="match status" value="1"/>
</dbReference>
<dbReference type="PROSITE" id="PS50861">
    <property type="entry name" value="AA_TRNA_LIGASE_II_GLYAB"/>
    <property type="match status" value="1"/>
</dbReference>
<proteinExistence type="inferred from homology"/>
<name>SYGB_AERHH</name>